<evidence type="ECO:0000255" key="1">
    <source>
        <dbReference type="HAMAP-Rule" id="MF_01161"/>
    </source>
</evidence>
<feature type="chain" id="PRO_1000065605" description="tRNA(Ile)-lysidine synthase">
    <location>
        <begin position="1"/>
        <end position="448"/>
    </location>
</feature>
<feature type="binding site" evidence="1">
    <location>
        <begin position="25"/>
        <end position="30"/>
    </location>
    <ligand>
        <name>ATP</name>
        <dbReference type="ChEBI" id="CHEBI:30616"/>
    </ligand>
</feature>
<proteinExistence type="inferred from homology"/>
<reference key="1">
    <citation type="journal article" date="2005" name="J. Bacteriol.">
        <title>Completion of the genome sequence of Brucella abortus and comparison to the highly similar genomes of Brucella melitensis and Brucella suis.</title>
        <authorList>
            <person name="Halling S.M."/>
            <person name="Peterson-Burch B.D."/>
            <person name="Bricker B.J."/>
            <person name="Zuerner R.L."/>
            <person name="Qing Z."/>
            <person name="Li L.-L."/>
            <person name="Kapur V."/>
            <person name="Alt D.P."/>
            <person name="Olsen S.C."/>
        </authorList>
    </citation>
    <scope>NUCLEOTIDE SEQUENCE [LARGE SCALE GENOMIC DNA]</scope>
    <source>
        <strain>9-941</strain>
    </source>
</reference>
<comment type="function">
    <text evidence="1">Ligates lysine onto the cytidine present at position 34 of the AUA codon-specific tRNA(Ile) that contains the anticodon CAU, in an ATP-dependent manner. Cytidine is converted to lysidine, thus changing the amino acid specificity of the tRNA from methionine to isoleucine.</text>
</comment>
<comment type="catalytic activity">
    <reaction evidence="1">
        <text>cytidine(34) in tRNA(Ile2) + L-lysine + ATP = lysidine(34) in tRNA(Ile2) + AMP + diphosphate + H(+)</text>
        <dbReference type="Rhea" id="RHEA:43744"/>
        <dbReference type="Rhea" id="RHEA-COMP:10625"/>
        <dbReference type="Rhea" id="RHEA-COMP:10670"/>
        <dbReference type="ChEBI" id="CHEBI:15378"/>
        <dbReference type="ChEBI" id="CHEBI:30616"/>
        <dbReference type="ChEBI" id="CHEBI:32551"/>
        <dbReference type="ChEBI" id="CHEBI:33019"/>
        <dbReference type="ChEBI" id="CHEBI:82748"/>
        <dbReference type="ChEBI" id="CHEBI:83665"/>
        <dbReference type="ChEBI" id="CHEBI:456215"/>
        <dbReference type="EC" id="6.3.4.19"/>
    </reaction>
</comment>
<comment type="subcellular location">
    <subcellularLocation>
        <location evidence="1">Cytoplasm</location>
    </subcellularLocation>
</comment>
<comment type="domain">
    <text>The N-terminal region contains the highly conserved SGGXDS motif, predicted to be a P-loop motif involved in ATP binding.</text>
</comment>
<comment type="similarity">
    <text evidence="1">Belongs to the tRNA(Ile)-lysidine synthase family.</text>
</comment>
<protein>
    <recommendedName>
        <fullName evidence="1">tRNA(Ile)-lysidine synthase</fullName>
        <ecNumber evidence="1">6.3.4.19</ecNumber>
    </recommendedName>
    <alternativeName>
        <fullName evidence="1">tRNA(Ile)-2-lysyl-cytidine synthase</fullName>
    </alternativeName>
    <alternativeName>
        <fullName evidence="1">tRNA(Ile)-lysidine synthetase</fullName>
    </alternativeName>
</protein>
<sequence>MGLSPVNIFKPFGLGRAKAVIAAVSGGSDSLGLLFLLKDYLSTLESPPVLIAVTVDHKLRAESALEAENVGLLCQKHGIMHCVLSWDDPKPAHGLAAAARTARYRLLVQAARDAGAGFIVTGHTENDQIETFLMRKARSGHCEARGLAAMSPRSLLEGSVELARPLLTVSRQALRDELTRRGIAWVDDPSNANIDYERPRVRLGVAAEADGQEVLEQIAQAGAARERDNAALVEALADPATLGVDAAGMMFLNADCYAALSPGARQLFSGLLASIAGGRRFLPGDGERRRIERMLSGQDAPRRLTVFGALIERGEKGAPHRFRRERRNLPKLDLVPGQHIVWDGRFCFFNSGGRSFEIAPPGRQELIDFLKNSGRDIESRRCEALLISPALYEGGKLAFVPFLPGAEWPQGVHIERHFAIFDHVLPGHDFALAQAVEARLGRACAEIS</sequence>
<organism>
    <name type="scientific">Brucella abortus biovar 1 (strain 9-941)</name>
    <dbReference type="NCBI Taxonomy" id="262698"/>
    <lineage>
        <taxon>Bacteria</taxon>
        <taxon>Pseudomonadati</taxon>
        <taxon>Pseudomonadota</taxon>
        <taxon>Alphaproteobacteria</taxon>
        <taxon>Hyphomicrobiales</taxon>
        <taxon>Brucellaceae</taxon>
        <taxon>Brucella/Ochrobactrum group</taxon>
        <taxon>Brucella</taxon>
    </lineage>
</organism>
<keyword id="KW-0067">ATP-binding</keyword>
<keyword id="KW-0963">Cytoplasm</keyword>
<keyword id="KW-0436">Ligase</keyword>
<keyword id="KW-0547">Nucleotide-binding</keyword>
<keyword id="KW-0819">tRNA processing</keyword>
<accession>Q57BI8</accession>
<name>TILS_BRUAB</name>
<gene>
    <name evidence="1" type="primary">tilS</name>
    <name type="ordered locus">BruAb1_1677</name>
</gene>
<dbReference type="EC" id="6.3.4.19" evidence="1"/>
<dbReference type="EMBL" id="AE017223">
    <property type="protein sequence ID" value="AAX74996.1"/>
    <property type="molecule type" value="Genomic_DNA"/>
</dbReference>
<dbReference type="RefSeq" id="WP_002967893.1">
    <property type="nucleotide sequence ID" value="NC_006932.1"/>
</dbReference>
<dbReference type="SMR" id="Q57BI8"/>
<dbReference type="EnsemblBacteria" id="AAX74996">
    <property type="protein sequence ID" value="AAX74996"/>
    <property type="gene ID" value="BruAb1_1677"/>
</dbReference>
<dbReference type="GeneID" id="93017943"/>
<dbReference type="KEGG" id="bmb:BruAb1_1677"/>
<dbReference type="HOGENOM" id="CLU_018869_3_3_5"/>
<dbReference type="Proteomes" id="UP000000540">
    <property type="component" value="Chromosome I"/>
</dbReference>
<dbReference type="GO" id="GO:0005737">
    <property type="term" value="C:cytoplasm"/>
    <property type="evidence" value="ECO:0007669"/>
    <property type="project" value="UniProtKB-SubCell"/>
</dbReference>
<dbReference type="GO" id="GO:0005524">
    <property type="term" value="F:ATP binding"/>
    <property type="evidence" value="ECO:0007669"/>
    <property type="project" value="UniProtKB-UniRule"/>
</dbReference>
<dbReference type="GO" id="GO:0032267">
    <property type="term" value="F:tRNA(Ile)-lysidine synthase activity"/>
    <property type="evidence" value="ECO:0007669"/>
    <property type="project" value="UniProtKB-EC"/>
</dbReference>
<dbReference type="GO" id="GO:0006400">
    <property type="term" value="P:tRNA modification"/>
    <property type="evidence" value="ECO:0007669"/>
    <property type="project" value="UniProtKB-UniRule"/>
</dbReference>
<dbReference type="CDD" id="cd01992">
    <property type="entry name" value="TilS_N"/>
    <property type="match status" value="1"/>
</dbReference>
<dbReference type="Gene3D" id="3.40.50.620">
    <property type="entry name" value="HUPs"/>
    <property type="match status" value="1"/>
</dbReference>
<dbReference type="HAMAP" id="MF_01161">
    <property type="entry name" value="tRNA_Ile_lys_synt"/>
    <property type="match status" value="1"/>
</dbReference>
<dbReference type="InterPro" id="IPR014729">
    <property type="entry name" value="Rossmann-like_a/b/a_fold"/>
</dbReference>
<dbReference type="InterPro" id="IPR011063">
    <property type="entry name" value="TilS/TtcA_N"/>
</dbReference>
<dbReference type="InterPro" id="IPR012094">
    <property type="entry name" value="tRNA_Ile_lys_synt"/>
</dbReference>
<dbReference type="InterPro" id="IPR012795">
    <property type="entry name" value="tRNA_Ile_lys_synt_N"/>
</dbReference>
<dbReference type="NCBIfam" id="TIGR02432">
    <property type="entry name" value="lysidine_TilS_N"/>
    <property type="match status" value="1"/>
</dbReference>
<dbReference type="PANTHER" id="PTHR43033">
    <property type="entry name" value="TRNA(ILE)-LYSIDINE SYNTHASE-RELATED"/>
    <property type="match status" value="1"/>
</dbReference>
<dbReference type="PANTHER" id="PTHR43033:SF1">
    <property type="entry name" value="TRNA(ILE)-LYSIDINE SYNTHASE-RELATED"/>
    <property type="match status" value="1"/>
</dbReference>
<dbReference type="Pfam" id="PF01171">
    <property type="entry name" value="ATP_bind_3"/>
    <property type="match status" value="1"/>
</dbReference>
<dbReference type="SUPFAM" id="SSF52402">
    <property type="entry name" value="Adenine nucleotide alpha hydrolases-like"/>
    <property type="match status" value="1"/>
</dbReference>